<sequence length="54" mass="5562">MLYYVLVFLVVALVAGALGFGGIAGASAGIAQILFFFFLALLVISLIASAIRKA</sequence>
<keyword id="KW-1003">Cell membrane</keyword>
<keyword id="KW-0472">Membrane</keyword>
<keyword id="KW-0812">Transmembrane</keyword>
<keyword id="KW-1133">Transmembrane helix</keyword>
<organism>
    <name type="scientific">Brucella melitensis biotype 1 (strain ATCC 23456 / CCUG 17765 / NCTC 10094 / 16M)</name>
    <dbReference type="NCBI Taxonomy" id="224914"/>
    <lineage>
        <taxon>Bacteria</taxon>
        <taxon>Pseudomonadati</taxon>
        <taxon>Pseudomonadota</taxon>
        <taxon>Alphaproteobacteria</taxon>
        <taxon>Hyphomicrobiales</taxon>
        <taxon>Brucellaceae</taxon>
        <taxon>Brucella/Ochrobactrum group</taxon>
        <taxon>Brucella</taxon>
    </lineage>
</organism>
<name>Y373_BRUME</name>
<reference key="1">
    <citation type="journal article" date="2002" name="Proc. Natl. Acad. Sci. U.S.A.">
        <title>The genome sequence of the facultative intracellular pathogen Brucella melitensis.</title>
        <authorList>
            <person name="DelVecchio V.G."/>
            <person name="Kapatral V."/>
            <person name="Redkar R.J."/>
            <person name="Patra G."/>
            <person name="Mujer C."/>
            <person name="Los T."/>
            <person name="Ivanova N."/>
            <person name="Anderson I."/>
            <person name="Bhattacharyya A."/>
            <person name="Lykidis A."/>
            <person name="Reznik G."/>
            <person name="Jablonski L."/>
            <person name="Larsen N."/>
            <person name="D'Souza M."/>
            <person name="Bernal A."/>
            <person name="Mazur M."/>
            <person name="Goltsman E."/>
            <person name="Selkov E."/>
            <person name="Elzer P.H."/>
            <person name="Hagius S."/>
            <person name="O'Callaghan D."/>
            <person name="Letesson J.-J."/>
            <person name="Haselkorn R."/>
            <person name="Kyrpides N.C."/>
            <person name="Overbeek R."/>
        </authorList>
    </citation>
    <scope>NUCLEOTIDE SEQUENCE [LARGE SCALE GENOMIC DNA]</scope>
    <source>
        <strain>ATCC 23456 / CCUG 17765 / NCTC 10094 / 16M</strain>
    </source>
</reference>
<evidence type="ECO:0000255" key="1">
    <source>
        <dbReference type="HAMAP-Rule" id="MF_01361"/>
    </source>
</evidence>
<evidence type="ECO:0000305" key="2"/>
<accession>Q8YIS0</accession>
<protein>
    <recommendedName>
        <fullName evidence="1">UPF0391 membrane protein BMEI0373</fullName>
    </recommendedName>
</protein>
<proteinExistence type="inferred from homology"/>
<feature type="chain" id="PRO_0000256720" description="UPF0391 membrane protein BMEI0373">
    <location>
        <begin position="1"/>
        <end position="54"/>
    </location>
</feature>
<feature type="transmembrane region" description="Helical" evidence="1">
    <location>
        <begin position="5"/>
        <end position="25"/>
    </location>
</feature>
<feature type="transmembrane region" description="Helical" evidence="1">
    <location>
        <begin position="29"/>
        <end position="48"/>
    </location>
</feature>
<comment type="subcellular location">
    <subcellularLocation>
        <location evidence="1">Cell membrane</location>
        <topology evidence="1">Multi-pass membrane protein</topology>
    </subcellularLocation>
</comment>
<comment type="similarity">
    <text evidence="1">Belongs to the UPF0391 family.</text>
</comment>
<comment type="sequence caution" evidence="2">
    <conflict type="erroneous initiation">
        <sequence resource="EMBL-CDS" id="AAL51554"/>
    </conflict>
</comment>
<gene>
    <name type="ordered locus">BMEI0373</name>
</gene>
<dbReference type="EMBL" id="AE008917">
    <property type="protein sequence ID" value="AAL51554.1"/>
    <property type="status" value="ALT_INIT"/>
    <property type="molecule type" value="Genomic_DNA"/>
</dbReference>
<dbReference type="PIR" id="AG3298">
    <property type="entry name" value="AG3298"/>
</dbReference>
<dbReference type="RefSeq" id="WP_004684127.1">
    <property type="nucleotide sequence ID" value="NZ_GG703781.1"/>
</dbReference>
<dbReference type="GeneID" id="29593134"/>
<dbReference type="KEGG" id="bme:BMEI0373"/>
<dbReference type="eggNOG" id="COG5487">
    <property type="taxonomic scope" value="Bacteria"/>
</dbReference>
<dbReference type="Proteomes" id="UP000000419">
    <property type="component" value="Chromosome I"/>
</dbReference>
<dbReference type="GO" id="GO:0005886">
    <property type="term" value="C:plasma membrane"/>
    <property type="evidence" value="ECO:0007669"/>
    <property type="project" value="UniProtKB-SubCell"/>
</dbReference>
<dbReference type="HAMAP" id="MF_01361">
    <property type="entry name" value="UPF0391"/>
    <property type="match status" value="1"/>
</dbReference>
<dbReference type="InterPro" id="IPR009760">
    <property type="entry name" value="DUF1328"/>
</dbReference>
<dbReference type="NCBIfam" id="NF010228">
    <property type="entry name" value="PRK13682.1-3"/>
    <property type="match status" value="1"/>
</dbReference>
<dbReference type="Pfam" id="PF07043">
    <property type="entry name" value="DUF1328"/>
    <property type="match status" value="1"/>
</dbReference>
<dbReference type="PIRSF" id="PIRSF036466">
    <property type="entry name" value="UCP036466"/>
    <property type="match status" value="1"/>
</dbReference>